<accession>C0RJA3</accession>
<dbReference type="EC" id="4.2.1.11" evidence="1"/>
<dbReference type="EMBL" id="CP001488">
    <property type="protein sequence ID" value="ACO00911.1"/>
    <property type="molecule type" value="Genomic_DNA"/>
</dbReference>
<dbReference type="RefSeq" id="WP_004683843.1">
    <property type="nucleotide sequence ID" value="NC_012441.1"/>
</dbReference>
<dbReference type="SMR" id="C0RJA3"/>
<dbReference type="GeneID" id="29593670"/>
<dbReference type="KEGG" id="bmi:BMEA_A1177"/>
<dbReference type="HOGENOM" id="CLU_031223_2_1_5"/>
<dbReference type="UniPathway" id="UPA00109">
    <property type="reaction ID" value="UER00187"/>
</dbReference>
<dbReference type="Proteomes" id="UP000001748">
    <property type="component" value="Chromosome I"/>
</dbReference>
<dbReference type="GO" id="GO:0009986">
    <property type="term" value="C:cell surface"/>
    <property type="evidence" value="ECO:0007669"/>
    <property type="project" value="UniProtKB-SubCell"/>
</dbReference>
<dbReference type="GO" id="GO:0005576">
    <property type="term" value="C:extracellular region"/>
    <property type="evidence" value="ECO:0007669"/>
    <property type="project" value="UniProtKB-SubCell"/>
</dbReference>
<dbReference type="GO" id="GO:0000015">
    <property type="term" value="C:phosphopyruvate hydratase complex"/>
    <property type="evidence" value="ECO:0007669"/>
    <property type="project" value="InterPro"/>
</dbReference>
<dbReference type="GO" id="GO:0000287">
    <property type="term" value="F:magnesium ion binding"/>
    <property type="evidence" value="ECO:0007669"/>
    <property type="project" value="UniProtKB-UniRule"/>
</dbReference>
<dbReference type="GO" id="GO:0004634">
    <property type="term" value="F:phosphopyruvate hydratase activity"/>
    <property type="evidence" value="ECO:0007669"/>
    <property type="project" value="UniProtKB-UniRule"/>
</dbReference>
<dbReference type="GO" id="GO:0006096">
    <property type="term" value="P:glycolytic process"/>
    <property type="evidence" value="ECO:0007669"/>
    <property type="project" value="UniProtKB-UniRule"/>
</dbReference>
<dbReference type="CDD" id="cd03313">
    <property type="entry name" value="enolase"/>
    <property type="match status" value="1"/>
</dbReference>
<dbReference type="FunFam" id="3.20.20.120:FF:000001">
    <property type="entry name" value="Enolase"/>
    <property type="match status" value="1"/>
</dbReference>
<dbReference type="FunFam" id="3.30.390.10:FF:000001">
    <property type="entry name" value="Enolase"/>
    <property type="match status" value="1"/>
</dbReference>
<dbReference type="Gene3D" id="3.20.20.120">
    <property type="entry name" value="Enolase-like C-terminal domain"/>
    <property type="match status" value="1"/>
</dbReference>
<dbReference type="Gene3D" id="3.30.390.10">
    <property type="entry name" value="Enolase-like, N-terminal domain"/>
    <property type="match status" value="1"/>
</dbReference>
<dbReference type="HAMAP" id="MF_00318">
    <property type="entry name" value="Enolase"/>
    <property type="match status" value="1"/>
</dbReference>
<dbReference type="InterPro" id="IPR000941">
    <property type="entry name" value="Enolase"/>
</dbReference>
<dbReference type="InterPro" id="IPR036849">
    <property type="entry name" value="Enolase-like_C_sf"/>
</dbReference>
<dbReference type="InterPro" id="IPR029017">
    <property type="entry name" value="Enolase-like_N"/>
</dbReference>
<dbReference type="InterPro" id="IPR020810">
    <property type="entry name" value="Enolase_C"/>
</dbReference>
<dbReference type="InterPro" id="IPR020809">
    <property type="entry name" value="Enolase_CS"/>
</dbReference>
<dbReference type="InterPro" id="IPR020811">
    <property type="entry name" value="Enolase_N"/>
</dbReference>
<dbReference type="NCBIfam" id="TIGR01060">
    <property type="entry name" value="eno"/>
    <property type="match status" value="1"/>
</dbReference>
<dbReference type="PANTHER" id="PTHR11902">
    <property type="entry name" value="ENOLASE"/>
    <property type="match status" value="1"/>
</dbReference>
<dbReference type="PANTHER" id="PTHR11902:SF1">
    <property type="entry name" value="ENOLASE"/>
    <property type="match status" value="1"/>
</dbReference>
<dbReference type="Pfam" id="PF00113">
    <property type="entry name" value="Enolase_C"/>
    <property type="match status" value="1"/>
</dbReference>
<dbReference type="Pfam" id="PF03952">
    <property type="entry name" value="Enolase_N"/>
    <property type="match status" value="1"/>
</dbReference>
<dbReference type="PIRSF" id="PIRSF001400">
    <property type="entry name" value="Enolase"/>
    <property type="match status" value="1"/>
</dbReference>
<dbReference type="PRINTS" id="PR00148">
    <property type="entry name" value="ENOLASE"/>
</dbReference>
<dbReference type="SFLD" id="SFLDF00002">
    <property type="entry name" value="enolase"/>
    <property type="match status" value="1"/>
</dbReference>
<dbReference type="SFLD" id="SFLDG00178">
    <property type="entry name" value="enolase"/>
    <property type="match status" value="1"/>
</dbReference>
<dbReference type="SMART" id="SM01192">
    <property type="entry name" value="Enolase_C"/>
    <property type="match status" value="1"/>
</dbReference>
<dbReference type="SMART" id="SM01193">
    <property type="entry name" value="Enolase_N"/>
    <property type="match status" value="1"/>
</dbReference>
<dbReference type="SUPFAM" id="SSF51604">
    <property type="entry name" value="Enolase C-terminal domain-like"/>
    <property type="match status" value="1"/>
</dbReference>
<dbReference type="SUPFAM" id="SSF54826">
    <property type="entry name" value="Enolase N-terminal domain-like"/>
    <property type="match status" value="1"/>
</dbReference>
<dbReference type="PROSITE" id="PS00164">
    <property type="entry name" value="ENOLASE"/>
    <property type="match status" value="1"/>
</dbReference>
<organism>
    <name type="scientific">Brucella melitensis biotype 2 (strain ATCC 23457)</name>
    <dbReference type="NCBI Taxonomy" id="546272"/>
    <lineage>
        <taxon>Bacteria</taxon>
        <taxon>Pseudomonadati</taxon>
        <taxon>Pseudomonadota</taxon>
        <taxon>Alphaproteobacteria</taxon>
        <taxon>Hyphomicrobiales</taxon>
        <taxon>Brucellaceae</taxon>
        <taxon>Brucella/Ochrobactrum group</taxon>
        <taxon>Brucella</taxon>
    </lineage>
</organism>
<feature type="chain" id="PRO_1000132988" description="Enolase">
    <location>
        <begin position="1"/>
        <end position="425"/>
    </location>
</feature>
<feature type="active site" description="Proton donor" evidence="1">
    <location>
        <position position="204"/>
    </location>
</feature>
<feature type="active site" description="Proton acceptor" evidence="1">
    <location>
        <position position="336"/>
    </location>
</feature>
<feature type="binding site" evidence="1">
    <location>
        <position position="162"/>
    </location>
    <ligand>
        <name>(2R)-2-phosphoglycerate</name>
        <dbReference type="ChEBI" id="CHEBI:58289"/>
    </ligand>
</feature>
<feature type="binding site" evidence="1">
    <location>
        <position position="241"/>
    </location>
    <ligand>
        <name>Mg(2+)</name>
        <dbReference type="ChEBI" id="CHEBI:18420"/>
    </ligand>
</feature>
<feature type="binding site" evidence="1">
    <location>
        <position position="284"/>
    </location>
    <ligand>
        <name>Mg(2+)</name>
        <dbReference type="ChEBI" id="CHEBI:18420"/>
    </ligand>
</feature>
<feature type="binding site" evidence="1">
    <location>
        <position position="311"/>
    </location>
    <ligand>
        <name>Mg(2+)</name>
        <dbReference type="ChEBI" id="CHEBI:18420"/>
    </ligand>
</feature>
<feature type="binding site" evidence="1">
    <location>
        <position position="336"/>
    </location>
    <ligand>
        <name>(2R)-2-phosphoglycerate</name>
        <dbReference type="ChEBI" id="CHEBI:58289"/>
    </ligand>
</feature>
<feature type="binding site" evidence="1">
    <location>
        <position position="365"/>
    </location>
    <ligand>
        <name>(2R)-2-phosphoglycerate</name>
        <dbReference type="ChEBI" id="CHEBI:58289"/>
    </ligand>
</feature>
<feature type="binding site" evidence="1">
    <location>
        <position position="366"/>
    </location>
    <ligand>
        <name>(2R)-2-phosphoglycerate</name>
        <dbReference type="ChEBI" id="CHEBI:58289"/>
    </ligand>
</feature>
<feature type="binding site" evidence="1">
    <location>
        <position position="387"/>
    </location>
    <ligand>
        <name>(2R)-2-phosphoglycerate</name>
        <dbReference type="ChEBI" id="CHEBI:58289"/>
    </ligand>
</feature>
<keyword id="KW-0963">Cytoplasm</keyword>
<keyword id="KW-0324">Glycolysis</keyword>
<keyword id="KW-0456">Lyase</keyword>
<keyword id="KW-0460">Magnesium</keyword>
<keyword id="KW-0479">Metal-binding</keyword>
<keyword id="KW-0964">Secreted</keyword>
<reference key="1">
    <citation type="submission" date="2009-03" db="EMBL/GenBank/DDBJ databases">
        <title>Brucella melitensis ATCC 23457 whole genome shotgun sequencing project.</title>
        <authorList>
            <person name="Setubal J.C."/>
            <person name="Boyle S."/>
            <person name="Crasta O.R."/>
            <person name="Gillespie J.J."/>
            <person name="Kenyon R.W."/>
            <person name="Lu J."/>
            <person name="Mane S."/>
            <person name="Nagrani S."/>
            <person name="Shallom J.M."/>
            <person name="Shallom S."/>
            <person name="Shukla M."/>
            <person name="Snyder E.E."/>
            <person name="Sobral B.W."/>
            <person name="Wattam A.R."/>
            <person name="Will R."/>
            <person name="Williams K."/>
            <person name="Yoo H."/>
            <person name="Munk C."/>
            <person name="Tapia R."/>
            <person name="Han C."/>
            <person name="Detter J.C."/>
            <person name="Bruce D."/>
            <person name="Brettin T.S."/>
        </authorList>
    </citation>
    <scope>NUCLEOTIDE SEQUENCE [LARGE SCALE GENOMIC DNA]</scope>
    <source>
        <strain>ATCC 23457</strain>
    </source>
</reference>
<comment type="function">
    <text evidence="1">Catalyzes the reversible conversion of 2-phosphoglycerate (2-PG) into phosphoenolpyruvate (PEP). It is essential for the degradation of carbohydrates via glycolysis.</text>
</comment>
<comment type="catalytic activity">
    <reaction evidence="1">
        <text>(2R)-2-phosphoglycerate = phosphoenolpyruvate + H2O</text>
        <dbReference type="Rhea" id="RHEA:10164"/>
        <dbReference type="ChEBI" id="CHEBI:15377"/>
        <dbReference type="ChEBI" id="CHEBI:58289"/>
        <dbReference type="ChEBI" id="CHEBI:58702"/>
        <dbReference type="EC" id="4.2.1.11"/>
    </reaction>
</comment>
<comment type="cofactor">
    <cofactor evidence="1">
        <name>Mg(2+)</name>
        <dbReference type="ChEBI" id="CHEBI:18420"/>
    </cofactor>
    <text evidence="1">Binds a second Mg(2+) ion via substrate during catalysis.</text>
</comment>
<comment type="pathway">
    <text evidence="1">Carbohydrate degradation; glycolysis; pyruvate from D-glyceraldehyde 3-phosphate: step 4/5.</text>
</comment>
<comment type="subcellular location">
    <subcellularLocation>
        <location evidence="1">Cytoplasm</location>
    </subcellularLocation>
    <subcellularLocation>
        <location evidence="1">Secreted</location>
    </subcellularLocation>
    <subcellularLocation>
        <location evidence="1">Cell surface</location>
    </subcellularLocation>
    <text evidence="1">Fractions of enolase are present in both the cytoplasm and on the cell surface.</text>
</comment>
<comment type="similarity">
    <text evidence="1">Belongs to the enolase family.</text>
</comment>
<protein>
    <recommendedName>
        <fullName evidence="1">Enolase</fullName>
        <ecNumber evidence="1">4.2.1.11</ecNumber>
    </recommendedName>
    <alternativeName>
        <fullName evidence="1">2-phospho-D-glycerate hydro-lyase</fullName>
    </alternativeName>
    <alternativeName>
        <fullName evidence="1">2-phosphoglycerate dehydratase</fullName>
    </alternativeName>
</protein>
<sequence length="425" mass="45319">MTAIIDIVGREILDSRGNPTVEVDVVLEDGSFGRAAVPSGASTGAHEAVELRDGGSRYLGKGVEKAVEVVNGKIFDAIAGMDAESQLLIDQTLIDLDGSANKGNLGANAILGVSLAVAKAAAQASGLPLYRYVGGTNAHVLPVPMMNIINGGAHADNPIDFQEFMILPVGATSIREAVRYGSEVFHTLKKRLKDAGHNTNVGDEGGFAPNLKNAQAALDFIMESIEKAGFKPGEDIALGLDCAATEFFKDGNYVYEGERKTRDPKAQAKYLAKLASDYPIVTIEDGMAEDDWEGWKYLTDLIGNKCQLVGDDLFVTNSARLRDGIRLGVANSILVKVNQIGSLSETLDAVETAHKAGYTAVMSHRSGETEDSTIADLAVATNCGQIKTGSLARSDRTAKYNQLIRIEEELDKQARYAGRSALKLL</sequence>
<gene>
    <name evidence="1" type="primary">eno</name>
    <name type="ordered locus">BMEA_A1177</name>
</gene>
<name>ENO_BRUMB</name>
<evidence type="ECO:0000255" key="1">
    <source>
        <dbReference type="HAMAP-Rule" id="MF_00318"/>
    </source>
</evidence>
<proteinExistence type="inferred from homology"/>